<protein>
    <recommendedName>
        <fullName evidence="1">UPF0473 protein GTNG_2486</fullName>
    </recommendedName>
</protein>
<accession>A4IR77</accession>
<gene>
    <name type="ordered locus">GTNG_2486</name>
</gene>
<organism>
    <name type="scientific">Geobacillus thermodenitrificans (strain NG80-2)</name>
    <dbReference type="NCBI Taxonomy" id="420246"/>
    <lineage>
        <taxon>Bacteria</taxon>
        <taxon>Bacillati</taxon>
        <taxon>Bacillota</taxon>
        <taxon>Bacilli</taxon>
        <taxon>Bacillales</taxon>
        <taxon>Anoxybacillaceae</taxon>
        <taxon>Geobacillus</taxon>
    </lineage>
</organism>
<feature type="chain" id="PRO_0000304831" description="UPF0473 protein GTNG_2486">
    <location>
        <begin position="1"/>
        <end position="98"/>
    </location>
</feature>
<name>Y2486_GEOTN</name>
<proteinExistence type="inferred from homology"/>
<dbReference type="EMBL" id="CP000557">
    <property type="protein sequence ID" value="ABO67831.1"/>
    <property type="status" value="ALT_INIT"/>
    <property type="molecule type" value="Genomic_DNA"/>
</dbReference>
<dbReference type="RefSeq" id="WP_008881012.1">
    <property type="nucleotide sequence ID" value="NC_009328.1"/>
</dbReference>
<dbReference type="GeneID" id="87623366"/>
<dbReference type="KEGG" id="gtn:GTNG_2486"/>
<dbReference type="eggNOG" id="COG3906">
    <property type="taxonomic scope" value="Bacteria"/>
</dbReference>
<dbReference type="HOGENOM" id="CLU_146610_2_1_9"/>
<dbReference type="Proteomes" id="UP000001578">
    <property type="component" value="Chromosome"/>
</dbReference>
<dbReference type="HAMAP" id="MF_01448">
    <property type="entry name" value="UPF0473"/>
    <property type="match status" value="1"/>
</dbReference>
<dbReference type="InterPro" id="IPR009711">
    <property type="entry name" value="UPF0473"/>
</dbReference>
<dbReference type="NCBIfam" id="NF010217">
    <property type="entry name" value="PRK13678.1-4"/>
    <property type="match status" value="1"/>
</dbReference>
<dbReference type="NCBIfam" id="NF010221">
    <property type="entry name" value="PRK13678.2-4"/>
    <property type="match status" value="1"/>
</dbReference>
<dbReference type="PANTHER" id="PTHR40066">
    <property type="entry name" value="UPF0473 PROTEIN CBO2561/CLC_2432"/>
    <property type="match status" value="1"/>
</dbReference>
<dbReference type="PANTHER" id="PTHR40066:SF1">
    <property type="entry name" value="UPF0473 PROTEIN CBO2561_CLC_2432"/>
    <property type="match status" value="1"/>
</dbReference>
<dbReference type="Pfam" id="PF06949">
    <property type="entry name" value="DUF1292"/>
    <property type="match status" value="1"/>
</dbReference>
<evidence type="ECO:0000255" key="1">
    <source>
        <dbReference type="HAMAP-Rule" id="MF_01448"/>
    </source>
</evidence>
<evidence type="ECO:0000305" key="2"/>
<sequence length="98" mass="11344">MEHGDRHITVVDEQGNEQLCEILFTFESDDFGKSYVFYYPVSAEAEDEDGETEVHVSAFIPGDENEEGELLPIETEEEWDMIEEVWNTFCAEQEEGEE</sequence>
<reference key="1">
    <citation type="journal article" date="2007" name="Proc. Natl. Acad. Sci. U.S.A.">
        <title>Genome and proteome of long-chain alkane degrading Geobacillus thermodenitrificans NG80-2 isolated from a deep-subsurface oil reservoir.</title>
        <authorList>
            <person name="Feng L."/>
            <person name="Wang W."/>
            <person name="Cheng J."/>
            <person name="Ren Y."/>
            <person name="Zhao G."/>
            <person name="Gao C."/>
            <person name="Tang Y."/>
            <person name="Liu X."/>
            <person name="Han W."/>
            <person name="Peng X."/>
            <person name="Liu R."/>
            <person name="Wang L."/>
        </authorList>
    </citation>
    <scope>NUCLEOTIDE SEQUENCE [LARGE SCALE GENOMIC DNA]</scope>
    <source>
        <strain>NG80-2</strain>
    </source>
</reference>
<comment type="similarity">
    <text evidence="1">Belongs to the UPF0473 family.</text>
</comment>
<comment type="sequence caution" evidence="2">
    <conflict type="erroneous initiation">
        <sequence resource="EMBL-CDS" id="ABO67831"/>
    </conflict>
</comment>